<sequence>MLEYQVKIDSFEGPLDLLLHLINRLEIDIYDIPVAKITEQYLLYVHTMRELELDVASEYLVMAATLLSIKSRMLLPKQEEELFDEDLLEEEEDPREELIGKLIEYRKYKDAAQELKEREEERQNAFTKPPSDLSEFAKESEAKDTNLHVTVYDMLGAFQKVLNRKKITKPAPSRITRQEIPIEDKMNEIMNHLRKTKKRTNFMTLFQHDQKEHLVVTFLAVLELMKSHQIMLEQEGNFEDIYIIGSETIHDA</sequence>
<name>SCPA_BACP2</name>
<organism>
    <name type="scientific">Bacillus pumilus (strain SAFR-032)</name>
    <dbReference type="NCBI Taxonomy" id="315750"/>
    <lineage>
        <taxon>Bacteria</taxon>
        <taxon>Bacillati</taxon>
        <taxon>Bacillota</taxon>
        <taxon>Bacilli</taxon>
        <taxon>Bacillales</taxon>
        <taxon>Bacillaceae</taxon>
        <taxon>Bacillus</taxon>
    </lineage>
</organism>
<evidence type="ECO:0000255" key="1">
    <source>
        <dbReference type="HAMAP-Rule" id="MF_01805"/>
    </source>
</evidence>
<evidence type="ECO:0000256" key="2">
    <source>
        <dbReference type="SAM" id="MobiDB-lite"/>
    </source>
</evidence>
<proteinExistence type="inferred from homology"/>
<dbReference type="EMBL" id="CP000813">
    <property type="protein sequence ID" value="ABV62725.1"/>
    <property type="molecule type" value="Genomic_DNA"/>
</dbReference>
<dbReference type="RefSeq" id="WP_012010429.1">
    <property type="nucleotide sequence ID" value="NZ_VEIS01000005.1"/>
</dbReference>
<dbReference type="SMR" id="A8FEQ8"/>
<dbReference type="STRING" id="315750.BPUM_2055"/>
<dbReference type="GeneID" id="5621321"/>
<dbReference type="KEGG" id="bpu:BPUM_2055"/>
<dbReference type="eggNOG" id="COG1354">
    <property type="taxonomic scope" value="Bacteria"/>
</dbReference>
<dbReference type="HOGENOM" id="CLU_038686_3_1_9"/>
<dbReference type="OrthoDB" id="9811016at2"/>
<dbReference type="Proteomes" id="UP000001355">
    <property type="component" value="Chromosome"/>
</dbReference>
<dbReference type="GO" id="GO:0005737">
    <property type="term" value="C:cytoplasm"/>
    <property type="evidence" value="ECO:0007669"/>
    <property type="project" value="UniProtKB-SubCell"/>
</dbReference>
<dbReference type="GO" id="GO:0051301">
    <property type="term" value="P:cell division"/>
    <property type="evidence" value="ECO:0007669"/>
    <property type="project" value="UniProtKB-KW"/>
</dbReference>
<dbReference type="GO" id="GO:0007059">
    <property type="term" value="P:chromosome segregation"/>
    <property type="evidence" value="ECO:0007669"/>
    <property type="project" value="UniProtKB-UniRule"/>
</dbReference>
<dbReference type="GO" id="GO:0006260">
    <property type="term" value="P:DNA replication"/>
    <property type="evidence" value="ECO:0007669"/>
    <property type="project" value="UniProtKB-UniRule"/>
</dbReference>
<dbReference type="Gene3D" id="6.10.250.2410">
    <property type="match status" value="1"/>
</dbReference>
<dbReference type="Gene3D" id="1.10.10.580">
    <property type="entry name" value="Structural maintenance of chromosome 1. Chain E"/>
    <property type="match status" value="1"/>
</dbReference>
<dbReference type="HAMAP" id="MF_01805">
    <property type="entry name" value="ScpA"/>
    <property type="match status" value="1"/>
</dbReference>
<dbReference type="InterPro" id="IPR003768">
    <property type="entry name" value="ScpA"/>
</dbReference>
<dbReference type="InterPro" id="IPR023093">
    <property type="entry name" value="ScpA-like_C"/>
</dbReference>
<dbReference type="NCBIfam" id="NF000994">
    <property type="entry name" value="PRK00104.1-3"/>
    <property type="match status" value="1"/>
</dbReference>
<dbReference type="NCBIfam" id="NF000995">
    <property type="entry name" value="PRK00104.1-4"/>
    <property type="match status" value="1"/>
</dbReference>
<dbReference type="PANTHER" id="PTHR33969">
    <property type="entry name" value="SEGREGATION AND CONDENSATION PROTEIN A"/>
    <property type="match status" value="1"/>
</dbReference>
<dbReference type="PANTHER" id="PTHR33969:SF2">
    <property type="entry name" value="SEGREGATION AND CONDENSATION PROTEIN A"/>
    <property type="match status" value="1"/>
</dbReference>
<dbReference type="Pfam" id="PF02616">
    <property type="entry name" value="SMC_ScpA"/>
    <property type="match status" value="1"/>
</dbReference>
<accession>A8FEQ8</accession>
<comment type="function">
    <text evidence="1">Participates in chromosomal partition during cell division. May act via the formation of a condensin-like complex containing Smc and ScpB that pull DNA away from mid-cell into both cell halves.</text>
</comment>
<comment type="subunit">
    <text evidence="1">Component of a cohesin-like complex composed of ScpA, ScpB and the Smc homodimer, in which ScpA and ScpB bind to the head domain of Smc. The presence of the three proteins is required for the association of the complex with DNA.</text>
</comment>
<comment type="subcellular location">
    <subcellularLocation>
        <location evidence="1">Cytoplasm</location>
    </subcellularLocation>
    <text evidence="1">Associated with two foci at the outer edges of the nucleoid region in young cells, and at four foci within both cell halves in older cells.</text>
</comment>
<comment type="similarity">
    <text evidence="1">Belongs to the ScpA family.</text>
</comment>
<reference key="1">
    <citation type="journal article" date="2007" name="PLoS ONE">
        <title>Paradoxical DNA repair and peroxide resistance gene conservation in Bacillus pumilus SAFR-032.</title>
        <authorList>
            <person name="Gioia J."/>
            <person name="Yerrapragada S."/>
            <person name="Qin X."/>
            <person name="Jiang H."/>
            <person name="Igboeli O.C."/>
            <person name="Muzny D."/>
            <person name="Dugan-Rocha S."/>
            <person name="Ding Y."/>
            <person name="Hawes A."/>
            <person name="Liu W."/>
            <person name="Perez L."/>
            <person name="Kovar C."/>
            <person name="Dinh H."/>
            <person name="Lee S."/>
            <person name="Nazareth L."/>
            <person name="Blyth P."/>
            <person name="Holder M."/>
            <person name="Buhay C."/>
            <person name="Tirumalai M.R."/>
            <person name="Liu Y."/>
            <person name="Dasgupta I."/>
            <person name="Bokhetache L."/>
            <person name="Fujita M."/>
            <person name="Karouia F."/>
            <person name="Eswara Moorthy P."/>
            <person name="Siefert J."/>
            <person name="Uzman A."/>
            <person name="Buzumbo P."/>
            <person name="Verma A."/>
            <person name="Zwiya H."/>
            <person name="McWilliams B.D."/>
            <person name="Olowu A."/>
            <person name="Clinkenbeard K.D."/>
            <person name="Newcombe D."/>
            <person name="Golebiewski L."/>
            <person name="Petrosino J.F."/>
            <person name="Nicholson W.L."/>
            <person name="Fox G.E."/>
            <person name="Venkateswaran K."/>
            <person name="Highlander S.K."/>
            <person name="Weinstock G.M."/>
        </authorList>
    </citation>
    <scope>NUCLEOTIDE SEQUENCE [LARGE SCALE GENOMIC DNA]</scope>
    <source>
        <strain>SAFR-032</strain>
    </source>
</reference>
<keyword id="KW-0131">Cell cycle</keyword>
<keyword id="KW-0132">Cell division</keyword>
<keyword id="KW-0159">Chromosome partition</keyword>
<keyword id="KW-0963">Cytoplasm</keyword>
<feature type="chain" id="PRO_1000069968" description="Segregation and condensation protein A">
    <location>
        <begin position="1"/>
        <end position="252"/>
    </location>
</feature>
<feature type="region of interest" description="Disordered" evidence="2">
    <location>
        <begin position="117"/>
        <end position="136"/>
    </location>
</feature>
<protein>
    <recommendedName>
        <fullName evidence="1">Segregation and condensation protein A</fullName>
    </recommendedName>
</protein>
<gene>
    <name evidence="1" type="primary">scpA</name>
    <name type="ordered locus">BPUM_2055</name>
</gene>